<name>HIS7_ANADE</name>
<organism>
    <name type="scientific">Anaeromyxobacter dehalogenans (strain 2CP-C)</name>
    <dbReference type="NCBI Taxonomy" id="290397"/>
    <lineage>
        <taxon>Bacteria</taxon>
        <taxon>Pseudomonadati</taxon>
        <taxon>Myxococcota</taxon>
        <taxon>Myxococcia</taxon>
        <taxon>Myxococcales</taxon>
        <taxon>Cystobacterineae</taxon>
        <taxon>Anaeromyxobacteraceae</taxon>
        <taxon>Anaeromyxobacter</taxon>
    </lineage>
</organism>
<sequence length="208" mass="22307">MTRRAAVKAPRAGAAARRGSVARRTKETDVAVDLRLEPGEASISTGLPFFDHMLDQISRHGGMALTVRAEGDLQVDAHHTVEDVGIGLGEALRQALEDKAGLARYGHAVVPLDEALVEAVVDLSGRPHLTFNAKLPSGKKFIGGYDVDLTQDFLQALVNHARICVHVNVRYGRNLHHVVEAIFKATARALRAATAREGTALPSTKGTL</sequence>
<feature type="chain" id="PRO_0000336291" description="Imidazoleglycerol-phosphate dehydratase">
    <location>
        <begin position="1"/>
        <end position="208"/>
    </location>
</feature>
<feature type="region of interest" description="Disordered" evidence="2">
    <location>
        <begin position="1"/>
        <end position="22"/>
    </location>
</feature>
<feature type="compositionally biased region" description="Low complexity" evidence="2">
    <location>
        <begin position="7"/>
        <end position="19"/>
    </location>
</feature>
<keyword id="KW-0028">Amino-acid biosynthesis</keyword>
<keyword id="KW-0963">Cytoplasm</keyword>
<keyword id="KW-0368">Histidine biosynthesis</keyword>
<keyword id="KW-0456">Lyase</keyword>
<keyword id="KW-1185">Reference proteome</keyword>
<dbReference type="EC" id="4.2.1.19" evidence="1"/>
<dbReference type="EMBL" id="CP000251">
    <property type="protein sequence ID" value="ABC80489.1"/>
    <property type="molecule type" value="Genomic_DNA"/>
</dbReference>
<dbReference type="RefSeq" id="WP_011419772.1">
    <property type="nucleotide sequence ID" value="NC_007760.1"/>
</dbReference>
<dbReference type="SMR" id="Q2INV5"/>
<dbReference type="STRING" id="290397.Adeh_0713"/>
<dbReference type="KEGG" id="ade:Adeh_0713"/>
<dbReference type="eggNOG" id="COG0131">
    <property type="taxonomic scope" value="Bacteria"/>
</dbReference>
<dbReference type="HOGENOM" id="CLU_044308_3_0_7"/>
<dbReference type="OrthoDB" id="9790411at2"/>
<dbReference type="UniPathway" id="UPA00031">
    <property type="reaction ID" value="UER00011"/>
</dbReference>
<dbReference type="Proteomes" id="UP000001935">
    <property type="component" value="Chromosome"/>
</dbReference>
<dbReference type="GO" id="GO:0005737">
    <property type="term" value="C:cytoplasm"/>
    <property type="evidence" value="ECO:0007669"/>
    <property type="project" value="UniProtKB-SubCell"/>
</dbReference>
<dbReference type="GO" id="GO:0004424">
    <property type="term" value="F:imidazoleglycerol-phosphate dehydratase activity"/>
    <property type="evidence" value="ECO:0007669"/>
    <property type="project" value="UniProtKB-UniRule"/>
</dbReference>
<dbReference type="GO" id="GO:0000105">
    <property type="term" value="P:L-histidine biosynthetic process"/>
    <property type="evidence" value="ECO:0007669"/>
    <property type="project" value="UniProtKB-UniRule"/>
</dbReference>
<dbReference type="CDD" id="cd07914">
    <property type="entry name" value="IGPD"/>
    <property type="match status" value="1"/>
</dbReference>
<dbReference type="FunFam" id="3.30.230.40:FF:000001">
    <property type="entry name" value="Imidazoleglycerol-phosphate dehydratase HisB"/>
    <property type="match status" value="1"/>
</dbReference>
<dbReference type="FunFam" id="3.30.230.40:FF:000003">
    <property type="entry name" value="Imidazoleglycerol-phosphate dehydratase HisB"/>
    <property type="match status" value="1"/>
</dbReference>
<dbReference type="Gene3D" id="3.30.230.40">
    <property type="entry name" value="Imidazole glycerol phosphate dehydratase, domain 1"/>
    <property type="match status" value="2"/>
</dbReference>
<dbReference type="HAMAP" id="MF_00076">
    <property type="entry name" value="HisB"/>
    <property type="match status" value="1"/>
</dbReference>
<dbReference type="InterPro" id="IPR038494">
    <property type="entry name" value="IGPD_sf"/>
</dbReference>
<dbReference type="InterPro" id="IPR000807">
    <property type="entry name" value="ImidazoleglycerolP_deHydtase"/>
</dbReference>
<dbReference type="InterPro" id="IPR020565">
    <property type="entry name" value="ImidazoleglycerP_deHydtase_CS"/>
</dbReference>
<dbReference type="InterPro" id="IPR020568">
    <property type="entry name" value="Ribosomal_Su5_D2-typ_SF"/>
</dbReference>
<dbReference type="NCBIfam" id="NF002111">
    <property type="entry name" value="PRK00951.2-1"/>
    <property type="match status" value="1"/>
</dbReference>
<dbReference type="NCBIfam" id="NF002114">
    <property type="entry name" value="PRK00951.2-4"/>
    <property type="match status" value="1"/>
</dbReference>
<dbReference type="PANTHER" id="PTHR23133:SF2">
    <property type="entry name" value="IMIDAZOLEGLYCEROL-PHOSPHATE DEHYDRATASE"/>
    <property type="match status" value="1"/>
</dbReference>
<dbReference type="PANTHER" id="PTHR23133">
    <property type="entry name" value="IMIDAZOLEGLYCEROL-PHOSPHATE DEHYDRATASE HIS7"/>
    <property type="match status" value="1"/>
</dbReference>
<dbReference type="Pfam" id="PF00475">
    <property type="entry name" value="IGPD"/>
    <property type="match status" value="1"/>
</dbReference>
<dbReference type="SUPFAM" id="SSF54211">
    <property type="entry name" value="Ribosomal protein S5 domain 2-like"/>
    <property type="match status" value="2"/>
</dbReference>
<dbReference type="PROSITE" id="PS00955">
    <property type="entry name" value="IGP_DEHYDRATASE_2"/>
    <property type="match status" value="1"/>
</dbReference>
<evidence type="ECO:0000255" key="1">
    <source>
        <dbReference type="HAMAP-Rule" id="MF_00076"/>
    </source>
</evidence>
<evidence type="ECO:0000256" key="2">
    <source>
        <dbReference type="SAM" id="MobiDB-lite"/>
    </source>
</evidence>
<comment type="catalytic activity">
    <reaction evidence="1">
        <text>D-erythro-1-(imidazol-4-yl)glycerol 3-phosphate = 3-(imidazol-4-yl)-2-oxopropyl phosphate + H2O</text>
        <dbReference type="Rhea" id="RHEA:11040"/>
        <dbReference type="ChEBI" id="CHEBI:15377"/>
        <dbReference type="ChEBI" id="CHEBI:57766"/>
        <dbReference type="ChEBI" id="CHEBI:58278"/>
        <dbReference type="EC" id="4.2.1.19"/>
    </reaction>
</comment>
<comment type="pathway">
    <text evidence="1">Amino-acid biosynthesis; L-histidine biosynthesis; L-histidine from 5-phospho-alpha-D-ribose 1-diphosphate: step 6/9.</text>
</comment>
<comment type="subcellular location">
    <subcellularLocation>
        <location evidence="1">Cytoplasm</location>
    </subcellularLocation>
</comment>
<comment type="similarity">
    <text evidence="1">Belongs to the imidazoleglycerol-phosphate dehydratase family.</text>
</comment>
<accession>Q2INV5</accession>
<proteinExistence type="inferred from homology"/>
<reference key="1">
    <citation type="submission" date="2006-01" db="EMBL/GenBank/DDBJ databases">
        <title>Complete sequence of Anaeromyxobacter dehalogenans 2CP-C.</title>
        <authorList>
            <person name="Copeland A."/>
            <person name="Lucas S."/>
            <person name="Lapidus A."/>
            <person name="Barry K."/>
            <person name="Detter J.C."/>
            <person name="Glavina T."/>
            <person name="Hammon N."/>
            <person name="Israni S."/>
            <person name="Pitluck S."/>
            <person name="Brettin T."/>
            <person name="Bruce D."/>
            <person name="Han C."/>
            <person name="Tapia R."/>
            <person name="Gilna P."/>
            <person name="Kiss H."/>
            <person name="Schmutz J."/>
            <person name="Larimer F."/>
            <person name="Land M."/>
            <person name="Kyrpides N."/>
            <person name="Anderson I."/>
            <person name="Sanford R.A."/>
            <person name="Ritalahti K.M."/>
            <person name="Thomas H.S."/>
            <person name="Kirby J.R."/>
            <person name="Zhulin I.B."/>
            <person name="Loeffler F.E."/>
            <person name="Richardson P."/>
        </authorList>
    </citation>
    <scope>NUCLEOTIDE SEQUENCE [LARGE SCALE GENOMIC DNA]</scope>
    <source>
        <strain>2CP-C</strain>
    </source>
</reference>
<protein>
    <recommendedName>
        <fullName evidence="1">Imidazoleglycerol-phosphate dehydratase</fullName>
        <shortName evidence="1">IGPD</shortName>
        <ecNumber evidence="1">4.2.1.19</ecNumber>
    </recommendedName>
</protein>
<gene>
    <name evidence="1" type="primary">hisB</name>
    <name type="ordered locus">Adeh_0713</name>
</gene>